<keyword id="KW-0067">ATP-binding</keyword>
<keyword id="KW-0963">Cytoplasm</keyword>
<keyword id="KW-0418">Kinase</keyword>
<keyword id="KW-0547">Nucleotide-binding</keyword>
<keyword id="KW-0665">Pyrimidine biosynthesis</keyword>
<keyword id="KW-1185">Reference proteome</keyword>
<keyword id="KW-0808">Transferase</keyword>
<name>PYRH_HALHL</name>
<gene>
    <name evidence="1" type="primary">pyrH</name>
    <name type="ordered locus">Hhal_1464</name>
</gene>
<comment type="function">
    <text evidence="1">Catalyzes the reversible phosphorylation of UMP to UDP.</text>
</comment>
<comment type="catalytic activity">
    <reaction evidence="1">
        <text>UMP + ATP = UDP + ADP</text>
        <dbReference type="Rhea" id="RHEA:24400"/>
        <dbReference type="ChEBI" id="CHEBI:30616"/>
        <dbReference type="ChEBI" id="CHEBI:57865"/>
        <dbReference type="ChEBI" id="CHEBI:58223"/>
        <dbReference type="ChEBI" id="CHEBI:456216"/>
        <dbReference type="EC" id="2.7.4.22"/>
    </reaction>
</comment>
<comment type="activity regulation">
    <text evidence="1">Inhibited by UTP.</text>
</comment>
<comment type="pathway">
    <text evidence="1">Pyrimidine metabolism; CTP biosynthesis via de novo pathway; UDP from UMP (UMPK route): step 1/1.</text>
</comment>
<comment type="subunit">
    <text evidence="1">Homohexamer.</text>
</comment>
<comment type="subcellular location">
    <subcellularLocation>
        <location evidence="1">Cytoplasm</location>
    </subcellularLocation>
</comment>
<comment type="similarity">
    <text evidence="1">Belongs to the UMP kinase family.</text>
</comment>
<evidence type="ECO:0000255" key="1">
    <source>
        <dbReference type="HAMAP-Rule" id="MF_01220"/>
    </source>
</evidence>
<reference key="1">
    <citation type="submission" date="2006-12" db="EMBL/GenBank/DDBJ databases">
        <title>Complete sequence of Halorhodospira halophila SL1.</title>
        <authorList>
            <consortium name="US DOE Joint Genome Institute"/>
            <person name="Copeland A."/>
            <person name="Lucas S."/>
            <person name="Lapidus A."/>
            <person name="Barry K."/>
            <person name="Detter J.C."/>
            <person name="Glavina del Rio T."/>
            <person name="Hammon N."/>
            <person name="Israni S."/>
            <person name="Dalin E."/>
            <person name="Tice H."/>
            <person name="Pitluck S."/>
            <person name="Saunders E."/>
            <person name="Brettin T."/>
            <person name="Bruce D."/>
            <person name="Han C."/>
            <person name="Tapia R."/>
            <person name="Schmutz J."/>
            <person name="Larimer F."/>
            <person name="Land M."/>
            <person name="Hauser L."/>
            <person name="Kyrpides N."/>
            <person name="Mikhailova N."/>
            <person name="Hoff W."/>
            <person name="Richardson P."/>
        </authorList>
    </citation>
    <scope>NUCLEOTIDE SEQUENCE [LARGE SCALE GENOMIC DNA]</scope>
    <source>
        <strain>DSM 244 / SL1</strain>
    </source>
</reference>
<accession>A1WX19</accession>
<sequence length="246" mass="26444">MPHYRRILLKLSGEALLGDGQYGIAANTLDRIADELAEINAMGVEVAVVIGGGNIFRGAGLAASGMDRVTADHMGMLATVMNALAIQDALERRSVFCRVMSAIKINQVCEDYIRRRAVRHLEKGRVVIFAAGTGNPFFTTDSAASLRAVEVGAELLLKGTKVDGVYSSDPVRDPEAKRYQQLTYDEVLSKRLEVMDATAIVLCRDQAMRIMVFDITSPGTMVAAARGEPVGTVVDPGLPSAQEESS</sequence>
<feature type="chain" id="PRO_0000323862" description="Uridylate kinase">
    <location>
        <begin position="1"/>
        <end position="246"/>
    </location>
</feature>
<feature type="binding site" evidence="1">
    <location>
        <begin position="10"/>
        <end position="13"/>
    </location>
    <ligand>
        <name>ATP</name>
        <dbReference type="ChEBI" id="CHEBI:30616"/>
    </ligand>
</feature>
<feature type="binding site" evidence="1">
    <location>
        <position position="52"/>
    </location>
    <ligand>
        <name>UMP</name>
        <dbReference type="ChEBI" id="CHEBI:57865"/>
    </ligand>
</feature>
<feature type="binding site" evidence="1">
    <location>
        <position position="53"/>
    </location>
    <ligand>
        <name>ATP</name>
        <dbReference type="ChEBI" id="CHEBI:30616"/>
    </ligand>
</feature>
<feature type="binding site" evidence="1">
    <location>
        <position position="57"/>
    </location>
    <ligand>
        <name>ATP</name>
        <dbReference type="ChEBI" id="CHEBI:30616"/>
    </ligand>
</feature>
<feature type="binding site" evidence="1">
    <location>
        <position position="72"/>
    </location>
    <ligand>
        <name>UMP</name>
        <dbReference type="ChEBI" id="CHEBI:57865"/>
    </ligand>
</feature>
<feature type="binding site" evidence="1">
    <location>
        <begin position="133"/>
        <end position="140"/>
    </location>
    <ligand>
        <name>UMP</name>
        <dbReference type="ChEBI" id="CHEBI:57865"/>
    </ligand>
</feature>
<feature type="binding site" evidence="1">
    <location>
        <position position="160"/>
    </location>
    <ligand>
        <name>ATP</name>
        <dbReference type="ChEBI" id="CHEBI:30616"/>
    </ligand>
</feature>
<feature type="binding site" evidence="1">
    <location>
        <position position="166"/>
    </location>
    <ligand>
        <name>ATP</name>
        <dbReference type="ChEBI" id="CHEBI:30616"/>
    </ligand>
</feature>
<feature type="binding site" evidence="1">
    <location>
        <position position="169"/>
    </location>
    <ligand>
        <name>ATP</name>
        <dbReference type="ChEBI" id="CHEBI:30616"/>
    </ligand>
</feature>
<dbReference type="EC" id="2.7.4.22" evidence="1"/>
<dbReference type="EMBL" id="CP000544">
    <property type="protein sequence ID" value="ABM62231.1"/>
    <property type="molecule type" value="Genomic_DNA"/>
</dbReference>
<dbReference type="SMR" id="A1WX19"/>
<dbReference type="STRING" id="349124.Hhal_1464"/>
<dbReference type="KEGG" id="hha:Hhal_1464"/>
<dbReference type="eggNOG" id="COG0528">
    <property type="taxonomic scope" value="Bacteria"/>
</dbReference>
<dbReference type="HOGENOM" id="CLU_033861_0_0_6"/>
<dbReference type="UniPathway" id="UPA00159">
    <property type="reaction ID" value="UER00275"/>
</dbReference>
<dbReference type="Proteomes" id="UP000000647">
    <property type="component" value="Chromosome"/>
</dbReference>
<dbReference type="GO" id="GO:0005829">
    <property type="term" value="C:cytosol"/>
    <property type="evidence" value="ECO:0007669"/>
    <property type="project" value="TreeGrafter"/>
</dbReference>
<dbReference type="GO" id="GO:0005524">
    <property type="term" value="F:ATP binding"/>
    <property type="evidence" value="ECO:0007669"/>
    <property type="project" value="UniProtKB-KW"/>
</dbReference>
<dbReference type="GO" id="GO:0033862">
    <property type="term" value="F:UMP kinase activity"/>
    <property type="evidence" value="ECO:0007669"/>
    <property type="project" value="UniProtKB-EC"/>
</dbReference>
<dbReference type="GO" id="GO:0044210">
    <property type="term" value="P:'de novo' CTP biosynthetic process"/>
    <property type="evidence" value="ECO:0007669"/>
    <property type="project" value="UniProtKB-UniRule"/>
</dbReference>
<dbReference type="GO" id="GO:0006225">
    <property type="term" value="P:UDP biosynthetic process"/>
    <property type="evidence" value="ECO:0007669"/>
    <property type="project" value="TreeGrafter"/>
</dbReference>
<dbReference type="CDD" id="cd04254">
    <property type="entry name" value="AAK_UMPK-PyrH-Ec"/>
    <property type="match status" value="1"/>
</dbReference>
<dbReference type="FunFam" id="3.40.1160.10:FF:000001">
    <property type="entry name" value="Uridylate kinase"/>
    <property type="match status" value="1"/>
</dbReference>
<dbReference type="Gene3D" id="3.40.1160.10">
    <property type="entry name" value="Acetylglutamate kinase-like"/>
    <property type="match status" value="1"/>
</dbReference>
<dbReference type="HAMAP" id="MF_01220_B">
    <property type="entry name" value="PyrH_B"/>
    <property type="match status" value="1"/>
</dbReference>
<dbReference type="InterPro" id="IPR036393">
    <property type="entry name" value="AceGlu_kinase-like_sf"/>
</dbReference>
<dbReference type="InterPro" id="IPR001048">
    <property type="entry name" value="Asp/Glu/Uridylate_kinase"/>
</dbReference>
<dbReference type="InterPro" id="IPR011817">
    <property type="entry name" value="Uridylate_kinase"/>
</dbReference>
<dbReference type="InterPro" id="IPR015963">
    <property type="entry name" value="Uridylate_kinase_bac"/>
</dbReference>
<dbReference type="NCBIfam" id="TIGR02075">
    <property type="entry name" value="pyrH_bact"/>
    <property type="match status" value="1"/>
</dbReference>
<dbReference type="PANTHER" id="PTHR42833">
    <property type="entry name" value="URIDYLATE KINASE"/>
    <property type="match status" value="1"/>
</dbReference>
<dbReference type="PANTHER" id="PTHR42833:SF4">
    <property type="entry name" value="URIDYLATE KINASE PUMPKIN, CHLOROPLASTIC"/>
    <property type="match status" value="1"/>
</dbReference>
<dbReference type="Pfam" id="PF00696">
    <property type="entry name" value="AA_kinase"/>
    <property type="match status" value="1"/>
</dbReference>
<dbReference type="PIRSF" id="PIRSF005650">
    <property type="entry name" value="Uridylate_kin"/>
    <property type="match status" value="1"/>
</dbReference>
<dbReference type="SUPFAM" id="SSF53633">
    <property type="entry name" value="Carbamate kinase-like"/>
    <property type="match status" value="1"/>
</dbReference>
<proteinExistence type="inferred from homology"/>
<protein>
    <recommendedName>
        <fullName evidence="1">Uridylate kinase</fullName>
        <shortName evidence="1">UK</shortName>
        <ecNumber evidence="1">2.7.4.22</ecNumber>
    </recommendedName>
    <alternativeName>
        <fullName evidence="1">Uridine monophosphate kinase</fullName>
        <shortName evidence="1">UMP kinase</shortName>
        <shortName evidence="1">UMPK</shortName>
    </alternativeName>
</protein>
<organism>
    <name type="scientific">Halorhodospira halophila (strain DSM 244 / SL1)</name>
    <name type="common">Ectothiorhodospira halophila (strain DSM 244 / SL1)</name>
    <dbReference type="NCBI Taxonomy" id="349124"/>
    <lineage>
        <taxon>Bacteria</taxon>
        <taxon>Pseudomonadati</taxon>
        <taxon>Pseudomonadota</taxon>
        <taxon>Gammaproteobacteria</taxon>
        <taxon>Chromatiales</taxon>
        <taxon>Ectothiorhodospiraceae</taxon>
        <taxon>Halorhodospira</taxon>
    </lineage>
</organism>